<feature type="chain" id="PRO_0000301898" description="3-hydroxyacyl-[acyl-carrier-protein] dehydratase FabZ">
    <location>
        <begin position="1"/>
        <end position="159"/>
    </location>
</feature>
<feature type="active site" evidence="1">
    <location>
        <position position="58"/>
    </location>
</feature>
<keyword id="KW-0963">Cytoplasm</keyword>
<keyword id="KW-0441">Lipid A biosynthesis</keyword>
<keyword id="KW-0444">Lipid biosynthesis</keyword>
<keyword id="KW-0443">Lipid metabolism</keyword>
<keyword id="KW-0456">Lyase</keyword>
<organism>
    <name type="scientific">Helicobacter pylori (strain HPAG1)</name>
    <dbReference type="NCBI Taxonomy" id="357544"/>
    <lineage>
        <taxon>Bacteria</taxon>
        <taxon>Pseudomonadati</taxon>
        <taxon>Campylobacterota</taxon>
        <taxon>Epsilonproteobacteria</taxon>
        <taxon>Campylobacterales</taxon>
        <taxon>Helicobacteraceae</taxon>
        <taxon>Helicobacter</taxon>
    </lineage>
</organism>
<reference key="1">
    <citation type="journal article" date="2006" name="Proc. Natl. Acad. Sci. U.S.A.">
        <title>The complete genome sequence of a chronic atrophic gastritis Helicobacter pylori strain: evolution during disease progression.</title>
        <authorList>
            <person name="Oh J.D."/>
            <person name="Kling-Baeckhed H."/>
            <person name="Giannakis M."/>
            <person name="Xu J."/>
            <person name="Fulton R.S."/>
            <person name="Fulton L.A."/>
            <person name="Cordum H.S."/>
            <person name="Wang C."/>
            <person name="Elliott G."/>
            <person name="Edwards J."/>
            <person name="Mardis E.R."/>
            <person name="Engstrand L.G."/>
            <person name="Gordon J.I."/>
        </authorList>
    </citation>
    <scope>NUCLEOTIDE SEQUENCE [LARGE SCALE GENOMIC DNA]</scope>
    <source>
        <strain>HPAG1</strain>
    </source>
</reference>
<gene>
    <name evidence="1" type="primary">fabZ</name>
    <name type="ordered locus">HPAG1_1322</name>
</gene>
<name>FABZ_HELPH</name>
<accession>Q1CRN3</accession>
<dbReference type="EC" id="4.2.1.59" evidence="1"/>
<dbReference type="EMBL" id="CP000241">
    <property type="protein sequence ID" value="ABF85389.1"/>
    <property type="molecule type" value="Genomic_DNA"/>
</dbReference>
<dbReference type="RefSeq" id="WP_000438051.1">
    <property type="nucleotide sequence ID" value="NC_008086.1"/>
</dbReference>
<dbReference type="SMR" id="Q1CRN3"/>
<dbReference type="KEGG" id="hpa:HPAG1_1322"/>
<dbReference type="HOGENOM" id="CLU_078912_1_0_7"/>
<dbReference type="GO" id="GO:0005737">
    <property type="term" value="C:cytoplasm"/>
    <property type="evidence" value="ECO:0007669"/>
    <property type="project" value="UniProtKB-SubCell"/>
</dbReference>
<dbReference type="GO" id="GO:0016020">
    <property type="term" value="C:membrane"/>
    <property type="evidence" value="ECO:0007669"/>
    <property type="project" value="GOC"/>
</dbReference>
<dbReference type="GO" id="GO:0019171">
    <property type="term" value="F:(3R)-hydroxyacyl-[acyl-carrier-protein] dehydratase activity"/>
    <property type="evidence" value="ECO:0007669"/>
    <property type="project" value="UniProtKB-EC"/>
</dbReference>
<dbReference type="GO" id="GO:0006633">
    <property type="term" value="P:fatty acid biosynthetic process"/>
    <property type="evidence" value="ECO:0007669"/>
    <property type="project" value="UniProtKB-UniRule"/>
</dbReference>
<dbReference type="GO" id="GO:0009245">
    <property type="term" value="P:lipid A biosynthetic process"/>
    <property type="evidence" value="ECO:0007669"/>
    <property type="project" value="UniProtKB-UniRule"/>
</dbReference>
<dbReference type="CDD" id="cd01288">
    <property type="entry name" value="FabZ"/>
    <property type="match status" value="1"/>
</dbReference>
<dbReference type="FunFam" id="3.10.129.10:FF:000001">
    <property type="entry name" value="3-hydroxyacyl-[acyl-carrier-protein] dehydratase FabZ"/>
    <property type="match status" value="1"/>
</dbReference>
<dbReference type="Gene3D" id="3.10.129.10">
    <property type="entry name" value="Hotdog Thioesterase"/>
    <property type="match status" value="1"/>
</dbReference>
<dbReference type="HAMAP" id="MF_00406">
    <property type="entry name" value="FabZ"/>
    <property type="match status" value="1"/>
</dbReference>
<dbReference type="InterPro" id="IPR013114">
    <property type="entry name" value="FabA_FabZ"/>
</dbReference>
<dbReference type="InterPro" id="IPR010084">
    <property type="entry name" value="FabZ"/>
</dbReference>
<dbReference type="InterPro" id="IPR029069">
    <property type="entry name" value="HotDog_dom_sf"/>
</dbReference>
<dbReference type="NCBIfam" id="TIGR01750">
    <property type="entry name" value="fabZ"/>
    <property type="match status" value="1"/>
</dbReference>
<dbReference type="NCBIfam" id="NF000582">
    <property type="entry name" value="PRK00006.1"/>
    <property type="match status" value="1"/>
</dbReference>
<dbReference type="PANTHER" id="PTHR30272">
    <property type="entry name" value="3-HYDROXYACYL-[ACYL-CARRIER-PROTEIN] DEHYDRATASE"/>
    <property type="match status" value="1"/>
</dbReference>
<dbReference type="PANTHER" id="PTHR30272:SF1">
    <property type="entry name" value="3-HYDROXYACYL-[ACYL-CARRIER-PROTEIN] DEHYDRATASE"/>
    <property type="match status" value="1"/>
</dbReference>
<dbReference type="Pfam" id="PF07977">
    <property type="entry name" value="FabA"/>
    <property type="match status" value="1"/>
</dbReference>
<dbReference type="SUPFAM" id="SSF54637">
    <property type="entry name" value="Thioesterase/thiol ester dehydrase-isomerase"/>
    <property type="match status" value="1"/>
</dbReference>
<sequence length="159" mass="18168">MEQSHQNLQSQFFIEHILQILPHRYPMLLVDRIIELQANKKIAAYKNITFNEDVFNGHFPNKPIFPGVLIVEGMAQSGGFLAFTSLWGFDPEIAKTKIVYFMTIDKVKFRIPVTPGDRLEYHLEVLKHKGMIWQVGGTAQVDGKVVAEAELKAMIAERE</sequence>
<comment type="function">
    <text evidence="1">Involved in unsaturated fatty acids biosynthesis. Catalyzes the dehydration of short chain beta-hydroxyacyl-ACPs and long chain saturated and unsaturated beta-hydroxyacyl-ACPs.</text>
</comment>
<comment type="catalytic activity">
    <reaction evidence="1">
        <text>a (3R)-hydroxyacyl-[ACP] = a (2E)-enoyl-[ACP] + H2O</text>
        <dbReference type="Rhea" id="RHEA:13097"/>
        <dbReference type="Rhea" id="RHEA-COMP:9925"/>
        <dbReference type="Rhea" id="RHEA-COMP:9945"/>
        <dbReference type="ChEBI" id="CHEBI:15377"/>
        <dbReference type="ChEBI" id="CHEBI:78784"/>
        <dbReference type="ChEBI" id="CHEBI:78827"/>
        <dbReference type="EC" id="4.2.1.59"/>
    </reaction>
</comment>
<comment type="subcellular location">
    <subcellularLocation>
        <location evidence="1">Cytoplasm</location>
    </subcellularLocation>
</comment>
<comment type="similarity">
    <text evidence="1">Belongs to the thioester dehydratase family. FabZ subfamily.</text>
</comment>
<protein>
    <recommendedName>
        <fullName evidence="1">3-hydroxyacyl-[acyl-carrier-protein] dehydratase FabZ</fullName>
        <ecNumber evidence="1">4.2.1.59</ecNumber>
    </recommendedName>
    <alternativeName>
        <fullName evidence="1">(3R)-hydroxymyristoyl-[acyl-carrier-protein] dehydratase</fullName>
        <shortName evidence="1">(3R)-hydroxymyristoyl-ACP dehydrase</shortName>
    </alternativeName>
    <alternativeName>
        <fullName evidence="1">Beta-hydroxyacyl-ACP dehydratase</fullName>
    </alternativeName>
</protein>
<evidence type="ECO:0000255" key="1">
    <source>
        <dbReference type="HAMAP-Rule" id="MF_00406"/>
    </source>
</evidence>
<proteinExistence type="inferred from homology"/>